<proteinExistence type="inferred from homology"/>
<sequence length="374" mass="40938">MTKQTVLYDQHVAEGARMVDFHGWMMPLHYGSQLEEHHAVRSDAGMFDVSHMTIVDLHGVRVRDFLRHLLANDVARLTQPGKALYSAMLNASGGVIDDLIVYFMADHHFRLVVNSATRERDLAWIGEHAPAFGVEICERRDLALIAVQGPTARQRVDALLTPAQRQMVAGMKPFFGRQVGSLFIATTGYTGEDGYEIALPQDEAVAFWQQLVQAGIRPCGLAARDTLRLEAGMNLYGQEMDEQISPLAANMGWTIAWAPPERDFIGRAALERQQSQHPEQLVGLVMREKGVLRAGMTIRCRDGQGDPCLGTITSGSFSPTLGCSIALARVPQGIGGEAWVEIRGRELALSVVKPGFVRHGHSLIPPADATAVGN</sequence>
<name>GCST_EDWI9</name>
<reference key="1">
    <citation type="submission" date="2009-03" db="EMBL/GenBank/DDBJ databases">
        <title>Complete genome sequence of Edwardsiella ictaluri 93-146.</title>
        <authorList>
            <person name="Williams M.L."/>
            <person name="Gillaspy A.F."/>
            <person name="Dyer D.W."/>
            <person name="Thune R.L."/>
            <person name="Waldbieser G.C."/>
            <person name="Schuster S.C."/>
            <person name="Gipson J."/>
            <person name="Zaitshik J."/>
            <person name="Landry C."/>
            <person name="Lawrence M.L."/>
        </authorList>
    </citation>
    <scope>NUCLEOTIDE SEQUENCE [LARGE SCALE GENOMIC DNA]</scope>
    <source>
        <strain>93-146</strain>
    </source>
</reference>
<feature type="chain" id="PRO_1000204636" description="Aminomethyltransferase">
    <location>
        <begin position="1"/>
        <end position="374"/>
    </location>
</feature>
<dbReference type="EC" id="2.1.2.10" evidence="1"/>
<dbReference type="EMBL" id="CP001600">
    <property type="protein sequence ID" value="ACR70491.1"/>
    <property type="molecule type" value="Genomic_DNA"/>
</dbReference>
<dbReference type="RefSeq" id="WP_015872565.1">
    <property type="nucleotide sequence ID" value="NZ_CP169062.1"/>
</dbReference>
<dbReference type="SMR" id="C5BAT2"/>
<dbReference type="STRING" id="67780.B6E78_08450"/>
<dbReference type="GeneID" id="69540208"/>
<dbReference type="KEGG" id="eic:NT01EI_3353"/>
<dbReference type="PATRIC" id="fig|634503.3.peg.2980"/>
<dbReference type="HOGENOM" id="CLU_007884_10_2_6"/>
<dbReference type="OrthoDB" id="9774591at2"/>
<dbReference type="Proteomes" id="UP000001485">
    <property type="component" value="Chromosome"/>
</dbReference>
<dbReference type="GO" id="GO:0005829">
    <property type="term" value="C:cytosol"/>
    <property type="evidence" value="ECO:0007669"/>
    <property type="project" value="TreeGrafter"/>
</dbReference>
<dbReference type="GO" id="GO:0005960">
    <property type="term" value="C:glycine cleavage complex"/>
    <property type="evidence" value="ECO:0007669"/>
    <property type="project" value="InterPro"/>
</dbReference>
<dbReference type="GO" id="GO:0004047">
    <property type="term" value="F:aminomethyltransferase activity"/>
    <property type="evidence" value="ECO:0007669"/>
    <property type="project" value="UniProtKB-UniRule"/>
</dbReference>
<dbReference type="GO" id="GO:0008483">
    <property type="term" value="F:transaminase activity"/>
    <property type="evidence" value="ECO:0007669"/>
    <property type="project" value="UniProtKB-KW"/>
</dbReference>
<dbReference type="GO" id="GO:0019464">
    <property type="term" value="P:glycine decarboxylation via glycine cleavage system"/>
    <property type="evidence" value="ECO:0007669"/>
    <property type="project" value="UniProtKB-UniRule"/>
</dbReference>
<dbReference type="FunFam" id="3.30.70.1400:FF:000001">
    <property type="entry name" value="Aminomethyltransferase"/>
    <property type="match status" value="1"/>
</dbReference>
<dbReference type="FunFam" id="4.10.1250.10:FF:000001">
    <property type="entry name" value="Aminomethyltransferase"/>
    <property type="match status" value="1"/>
</dbReference>
<dbReference type="Gene3D" id="2.40.30.110">
    <property type="entry name" value="Aminomethyltransferase beta-barrel domains"/>
    <property type="match status" value="1"/>
</dbReference>
<dbReference type="Gene3D" id="3.30.70.1400">
    <property type="entry name" value="Aminomethyltransferase beta-barrel domains"/>
    <property type="match status" value="1"/>
</dbReference>
<dbReference type="Gene3D" id="4.10.1250.10">
    <property type="entry name" value="Aminomethyltransferase fragment"/>
    <property type="match status" value="1"/>
</dbReference>
<dbReference type="Gene3D" id="3.30.1360.120">
    <property type="entry name" value="Probable tRNA modification gtpase trme, domain 1"/>
    <property type="match status" value="1"/>
</dbReference>
<dbReference type="HAMAP" id="MF_00259">
    <property type="entry name" value="GcvT"/>
    <property type="match status" value="1"/>
</dbReference>
<dbReference type="InterPro" id="IPR006223">
    <property type="entry name" value="GCS_T"/>
</dbReference>
<dbReference type="InterPro" id="IPR022903">
    <property type="entry name" value="GCS_T_bac"/>
</dbReference>
<dbReference type="InterPro" id="IPR013977">
    <property type="entry name" value="GCST_C"/>
</dbReference>
<dbReference type="InterPro" id="IPR006222">
    <property type="entry name" value="GCV_T_N"/>
</dbReference>
<dbReference type="InterPro" id="IPR028896">
    <property type="entry name" value="GcvT/YgfZ/DmdA"/>
</dbReference>
<dbReference type="InterPro" id="IPR029043">
    <property type="entry name" value="GcvT/YgfZ_C"/>
</dbReference>
<dbReference type="InterPro" id="IPR027266">
    <property type="entry name" value="TrmE/GcvT_dom1"/>
</dbReference>
<dbReference type="NCBIfam" id="TIGR00528">
    <property type="entry name" value="gcvT"/>
    <property type="match status" value="1"/>
</dbReference>
<dbReference type="NCBIfam" id="NF001567">
    <property type="entry name" value="PRK00389.1"/>
    <property type="match status" value="1"/>
</dbReference>
<dbReference type="PANTHER" id="PTHR43757">
    <property type="entry name" value="AMINOMETHYLTRANSFERASE"/>
    <property type="match status" value="1"/>
</dbReference>
<dbReference type="PANTHER" id="PTHR43757:SF2">
    <property type="entry name" value="AMINOMETHYLTRANSFERASE, MITOCHONDRIAL"/>
    <property type="match status" value="1"/>
</dbReference>
<dbReference type="Pfam" id="PF01571">
    <property type="entry name" value="GCV_T"/>
    <property type="match status" value="1"/>
</dbReference>
<dbReference type="Pfam" id="PF08669">
    <property type="entry name" value="GCV_T_C"/>
    <property type="match status" value="1"/>
</dbReference>
<dbReference type="PIRSF" id="PIRSF006487">
    <property type="entry name" value="GcvT"/>
    <property type="match status" value="1"/>
</dbReference>
<dbReference type="SUPFAM" id="SSF101790">
    <property type="entry name" value="Aminomethyltransferase beta-barrel domain"/>
    <property type="match status" value="1"/>
</dbReference>
<dbReference type="SUPFAM" id="SSF103025">
    <property type="entry name" value="Folate-binding domain"/>
    <property type="match status" value="1"/>
</dbReference>
<comment type="function">
    <text evidence="1">The glycine cleavage system catalyzes the degradation of glycine.</text>
</comment>
<comment type="catalytic activity">
    <reaction evidence="1">
        <text>N(6)-[(R)-S(8)-aminomethyldihydrolipoyl]-L-lysyl-[protein] + (6S)-5,6,7,8-tetrahydrofolate = N(6)-[(R)-dihydrolipoyl]-L-lysyl-[protein] + (6R)-5,10-methylene-5,6,7,8-tetrahydrofolate + NH4(+)</text>
        <dbReference type="Rhea" id="RHEA:16945"/>
        <dbReference type="Rhea" id="RHEA-COMP:10475"/>
        <dbReference type="Rhea" id="RHEA-COMP:10492"/>
        <dbReference type="ChEBI" id="CHEBI:15636"/>
        <dbReference type="ChEBI" id="CHEBI:28938"/>
        <dbReference type="ChEBI" id="CHEBI:57453"/>
        <dbReference type="ChEBI" id="CHEBI:83100"/>
        <dbReference type="ChEBI" id="CHEBI:83143"/>
        <dbReference type="EC" id="2.1.2.10"/>
    </reaction>
</comment>
<comment type="subunit">
    <text evidence="1">The glycine cleavage system is composed of four proteins: P, T, L and H.</text>
</comment>
<comment type="similarity">
    <text evidence="1">Belongs to the GcvT family.</text>
</comment>
<accession>C5BAT2</accession>
<gene>
    <name evidence="1" type="primary">gcvT</name>
    <name type="ordered locus">NT01EI_3353</name>
</gene>
<keyword id="KW-0032">Aminotransferase</keyword>
<keyword id="KW-0808">Transferase</keyword>
<evidence type="ECO:0000255" key="1">
    <source>
        <dbReference type="HAMAP-Rule" id="MF_00259"/>
    </source>
</evidence>
<organism>
    <name type="scientific">Edwardsiella ictaluri (strain 93-146)</name>
    <dbReference type="NCBI Taxonomy" id="634503"/>
    <lineage>
        <taxon>Bacteria</taxon>
        <taxon>Pseudomonadati</taxon>
        <taxon>Pseudomonadota</taxon>
        <taxon>Gammaproteobacteria</taxon>
        <taxon>Enterobacterales</taxon>
        <taxon>Hafniaceae</taxon>
        <taxon>Edwardsiella</taxon>
    </lineage>
</organism>
<protein>
    <recommendedName>
        <fullName evidence="1">Aminomethyltransferase</fullName>
        <ecNumber evidence="1">2.1.2.10</ecNumber>
    </recommendedName>
    <alternativeName>
        <fullName evidence="1">Glycine cleavage system T protein</fullName>
    </alternativeName>
</protein>